<accession>Q91Y02</accession>
<reference key="1">
    <citation type="journal article" date="2001" name="Genome Res.">
        <title>Comparative DNA sequence analysis of mouse and human protocadherin gene clusters.</title>
        <authorList>
            <person name="Wu Q."/>
            <person name="Zhang T."/>
            <person name="Cheng J.-F."/>
            <person name="Kim Y."/>
            <person name="Grimwood J."/>
            <person name="Schmutz J."/>
            <person name="Dickson M."/>
            <person name="Noonan J.P."/>
            <person name="Zhang M.Q."/>
            <person name="Myers R.M."/>
            <person name="Maniatis T."/>
        </authorList>
    </citation>
    <scope>NUCLEOTIDE SEQUENCE [MRNA]</scope>
    <source>
        <tissue>Brain</tissue>
    </source>
</reference>
<reference key="2">
    <citation type="journal article" date="2009" name="PLoS Biol.">
        <title>Lineage-specific biology revealed by a finished genome assembly of the mouse.</title>
        <authorList>
            <person name="Church D.M."/>
            <person name="Goodstadt L."/>
            <person name="Hillier L.W."/>
            <person name="Zody M.C."/>
            <person name="Goldstein S."/>
            <person name="She X."/>
            <person name="Bult C.J."/>
            <person name="Agarwala R."/>
            <person name="Cherry J.L."/>
            <person name="DiCuccio M."/>
            <person name="Hlavina W."/>
            <person name="Kapustin Y."/>
            <person name="Meric P."/>
            <person name="Maglott D."/>
            <person name="Birtle Z."/>
            <person name="Marques A.C."/>
            <person name="Graves T."/>
            <person name="Zhou S."/>
            <person name="Teague B."/>
            <person name="Potamousis K."/>
            <person name="Churas C."/>
            <person name="Place M."/>
            <person name="Herschleb J."/>
            <person name="Runnheim R."/>
            <person name="Forrest D."/>
            <person name="Amos-Landgraf J."/>
            <person name="Schwartz D.C."/>
            <person name="Cheng Z."/>
            <person name="Lindblad-Toh K."/>
            <person name="Eichler E.E."/>
            <person name="Ponting C.P."/>
        </authorList>
    </citation>
    <scope>NUCLEOTIDE SEQUENCE [LARGE SCALE GENOMIC DNA]</scope>
    <source>
        <strain>C57BL/6J</strain>
    </source>
</reference>
<reference key="3">
    <citation type="submission" date="2005-09" db="EMBL/GenBank/DDBJ databases">
        <authorList>
            <person name="Mural R.J."/>
            <person name="Adams M.D."/>
            <person name="Myers E.W."/>
            <person name="Smith H.O."/>
            <person name="Venter J.C."/>
        </authorList>
    </citation>
    <scope>NUCLEOTIDE SEQUENCE [LARGE SCALE GENOMIC DNA]</scope>
</reference>
<gene>
    <name type="primary">Pcdhb18</name>
</gene>
<comment type="function">
    <text evidence="1">Potential calcium-dependent cell-adhesion protein.</text>
</comment>
<comment type="subcellular location">
    <subcellularLocation>
        <location evidence="4">Cell membrane</location>
        <topology evidence="4">Single-pass membrane protein</topology>
    </subcellularLocation>
</comment>
<proteinExistence type="evidence at transcript level"/>
<organism>
    <name type="scientific">Mus musculus</name>
    <name type="common">Mouse</name>
    <dbReference type="NCBI Taxonomy" id="10090"/>
    <lineage>
        <taxon>Eukaryota</taxon>
        <taxon>Metazoa</taxon>
        <taxon>Chordata</taxon>
        <taxon>Craniata</taxon>
        <taxon>Vertebrata</taxon>
        <taxon>Euteleostomi</taxon>
        <taxon>Mammalia</taxon>
        <taxon>Eutheria</taxon>
        <taxon>Euarchontoglires</taxon>
        <taxon>Glires</taxon>
        <taxon>Rodentia</taxon>
        <taxon>Myomorpha</taxon>
        <taxon>Muroidea</taxon>
        <taxon>Muridae</taxon>
        <taxon>Murinae</taxon>
        <taxon>Mus</taxon>
        <taxon>Mus</taxon>
    </lineage>
</organism>
<feature type="signal peptide" evidence="2">
    <location>
        <begin position="1"/>
        <end position="26"/>
    </location>
</feature>
<feature type="chain" id="PRO_0000432743" description="Protocadherin beta-18" evidence="2">
    <location>
        <begin position="27"/>
        <end position="792"/>
    </location>
</feature>
<feature type="transmembrane region" description="Helical" evidence="2">
    <location>
        <begin position="693"/>
        <end position="713"/>
    </location>
</feature>
<feature type="domain" description="Cadherin 1" evidence="3">
    <location>
        <begin position="27"/>
        <end position="133"/>
    </location>
</feature>
<feature type="domain" description="Cadherin 2" evidence="3">
    <location>
        <begin position="134"/>
        <end position="242"/>
    </location>
</feature>
<feature type="domain" description="Cadherin 3" evidence="3">
    <location>
        <begin position="243"/>
        <end position="347"/>
    </location>
</feature>
<feature type="domain" description="Cadherin 4" evidence="3">
    <location>
        <begin position="348"/>
        <end position="451"/>
    </location>
</feature>
<feature type="domain" description="Cadherin 5" evidence="3">
    <location>
        <begin position="452"/>
        <end position="561"/>
    </location>
</feature>
<feature type="domain" description="Cadherin 6" evidence="3">
    <location>
        <begin position="568"/>
        <end position="676"/>
    </location>
</feature>
<feature type="glycosylation site" description="N-linked (GlcNAc...) asparagine" evidence="2">
    <location>
        <position position="169"/>
    </location>
</feature>
<feature type="glycosylation site" description="N-linked (GlcNAc...) asparagine" evidence="2">
    <location>
        <position position="418"/>
    </location>
</feature>
<feature type="glycosylation site" description="N-linked (GlcNAc...) asparagine" evidence="2">
    <location>
        <position position="452"/>
    </location>
</feature>
<protein>
    <recommendedName>
        <fullName>Protocadherin beta-18</fullName>
        <shortName>PCDH-beta-18</shortName>
    </recommendedName>
</protein>
<sequence>MAARGSCVSRQRQVLFLFLLGGLCLAGSELGRYSVTEETERGSFVANLAKDLGLGVEALAAKRTRVVCDDNKQHLFLDSHTGDLLTNEKLDREKLCGPTEPCMLYFQILMDNPFQIYRAELRILDINDHSPIFQDKKMILKILENTAVGTTFRLERAQDSDGGRNGIQNYTISPNTFFHITVHNSDEGMIYPELVLDKALDWEGQPEFSLTLTALDGGSPPRSGTATIHILVLDINDNAPQFPQELYEIQAPENSPIGLVVIKVTGEDVDSGVNAEISYSFFDASEDIRATFQINPFSGEITLKALLDYEFIKSYKLNVQAVDGGGLSARCTVLVRVLDVNDNAPELIMSSLVNEVVENSPETVLAVFRINDRDSGENGKMVCHIQENLPFLLKPSVDNFYILMTEGALDRESRAEYNITITVSDLGTPRLTTQHTIRVQVSDINDNAPAFNQTSYTLFVRENNSPAMHIGTISATDSDAGSNAHITYSLLPTQDLQMTLTSLVSINADNGQLFAIKALDYEALQAFEFHVGATDRGSPELSSQALVRVVVLDDNDNAPFVLYPMQNASAPYTELLPRTAEPGYLVTKVVAVDRDSGQNAWLSFQLLKATEPGLFSVWAHNGEVRTTRLLSERDVPKHRLLLLVKDNGDPPRSASVTLQVLLVDGFSQPYLPLPEVAHNPTQGEEDVLTLYLVIALASVSSLFLLSVLLFVGVRLCRRARAASLGGCSVPEGHFPGHLVDVSGTGTLSQNYQYEVCLMGGSSGTSDFKFLKSIYPEVHAYSSQDNSDGNPTF</sequence>
<evidence type="ECO:0000250" key="1"/>
<evidence type="ECO:0000255" key="2"/>
<evidence type="ECO:0000255" key="3">
    <source>
        <dbReference type="PROSITE-ProRule" id="PRU00043"/>
    </source>
</evidence>
<evidence type="ECO:0000305" key="4"/>
<keyword id="KW-0106">Calcium</keyword>
<keyword id="KW-0130">Cell adhesion</keyword>
<keyword id="KW-1003">Cell membrane</keyword>
<keyword id="KW-0325">Glycoprotein</keyword>
<keyword id="KW-0472">Membrane</keyword>
<keyword id="KW-1185">Reference proteome</keyword>
<keyword id="KW-0677">Repeat</keyword>
<keyword id="KW-0732">Signal</keyword>
<keyword id="KW-0812">Transmembrane</keyword>
<keyword id="KW-1133">Transmembrane helix</keyword>
<name>PCDBI_MOUSE</name>
<dbReference type="EMBL" id="AY013779">
    <property type="protein sequence ID" value="AAK26068.1"/>
    <property type="molecule type" value="mRNA"/>
</dbReference>
<dbReference type="EMBL" id="AC020967">
    <property type="status" value="NOT_ANNOTATED_CDS"/>
    <property type="molecule type" value="Genomic_DNA"/>
</dbReference>
<dbReference type="EMBL" id="CH466528">
    <property type="protein sequence ID" value="EDL10153.1"/>
    <property type="molecule type" value="Genomic_DNA"/>
</dbReference>
<dbReference type="CCDS" id="CCDS29184.1"/>
<dbReference type="RefSeq" id="NP_444373.1">
    <property type="nucleotide sequence ID" value="NM_053143.3"/>
</dbReference>
<dbReference type="SMR" id="Q91Y02"/>
<dbReference type="FunCoup" id="Q91Y02">
    <property type="interactions" value="8"/>
</dbReference>
<dbReference type="STRING" id="10090.ENSMUSP00000052113"/>
<dbReference type="GlyCosmos" id="Q91Y02">
    <property type="glycosylation" value="3 sites, No reported glycans"/>
</dbReference>
<dbReference type="GlyGen" id="Q91Y02">
    <property type="glycosylation" value="4 sites"/>
</dbReference>
<dbReference type="iPTMnet" id="Q91Y02"/>
<dbReference type="PhosphoSitePlus" id="Q91Y02"/>
<dbReference type="PaxDb" id="10090-ENSMUSP00000052113"/>
<dbReference type="ProteomicsDB" id="289325"/>
<dbReference type="Pumba" id="Q91Y02"/>
<dbReference type="DNASU" id="93889"/>
<dbReference type="Ensembl" id="ENSMUST00000055949.4">
    <property type="protein sequence ID" value="ENSMUSP00000052113.3"/>
    <property type="gene ID" value="ENSMUSG00000048347.6"/>
</dbReference>
<dbReference type="GeneID" id="93889"/>
<dbReference type="KEGG" id="mmu:93889"/>
<dbReference type="UCSC" id="uc008eqd.1">
    <property type="organism name" value="mouse"/>
</dbReference>
<dbReference type="AGR" id="MGI:2136756"/>
<dbReference type="CTD" id="93889"/>
<dbReference type="MGI" id="MGI:2136756">
    <property type="gene designation" value="Pcdhb18"/>
</dbReference>
<dbReference type="VEuPathDB" id="HostDB:ENSMUSG00000048347"/>
<dbReference type="eggNOG" id="KOG3594">
    <property type="taxonomic scope" value="Eukaryota"/>
</dbReference>
<dbReference type="GeneTree" id="ENSGT00940000163508"/>
<dbReference type="HOGENOM" id="CLU_006480_3_0_1"/>
<dbReference type="InParanoid" id="Q91Y02"/>
<dbReference type="OMA" id="LCISIYY"/>
<dbReference type="OrthoDB" id="6252479at2759"/>
<dbReference type="PhylomeDB" id="Q91Y02"/>
<dbReference type="TreeFam" id="TF332299"/>
<dbReference type="BioGRID-ORCS" id="93889">
    <property type="hits" value="3 hits in 77 CRISPR screens"/>
</dbReference>
<dbReference type="PRO" id="PR:Q91Y02"/>
<dbReference type="Proteomes" id="UP000000589">
    <property type="component" value="Chromosome 18"/>
</dbReference>
<dbReference type="RNAct" id="Q91Y02">
    <property type="molecule type" value="protein"/>
</dbReference>
<dbReference type="Bgee" id="ENSMUSG00000048347">
    <property type="expression patterns" value="Expressed in cortical plate and 27 other cell types or tissues"/>
</dbReference>
<dbReference type="GO" id="GO:0005886">
    <property type="term" value="C:plasma membrane"/>
    <property type="evidence" value="ECO:0007669"/>
    <property type="project" value="UniProtKB-SubCell"/>
</dbReference>
<dbReference type="GO" id="GO:0005509">
    <property type="term" value="F:calcium ion binding"/>
    <property type="evidence" value="ECO:0007669"/>
    <property type="project" value="InterPro"/>
</dbReference>
<dbReference type="GO" id="GO:0007156">
    <property type="term" value="P:homophilic cell adhesion via plasma membrane adhesion molecules"/>
    <property type="evidence" value="ECO:0007669"/>
    <property type="project" value="InterPro"/>
</dbReference>
<dbReference type="CDD" id="cd11304">
    <property type="entry name" value="Cadherin_repeat"/>
    <property type="match status" value="5"/>
</dbReference>
<dbReference type="FunFam" id="2.60.40.60:FF:000001">
    <property type="entry name" value="Protocadherin alpha 2"/>
    <property type="match status" value="1"/>
</dbReference>
<dbReference type="FunFam" id="2.60.40.60:FF:000002">
    <property type="entry name" value="Protocadherin alpha 2"/>
    <property type="match status" value="1"/>
</dbReference>
<dbReference type="FunFam" id="2.60.40.60:FF:000006">
    <property type="entry name" value="Protocadherin alpha 2"/>
    <property type="match status" value="1"/>
</dbReference>
<dbReference type="FunFam" id="2.60.40.60:FF:000046">
    <property type="entry name" value="Protocadherin beta 5"/>
    <property type="match status" value="1"/>
</dbReference>
<dbReference type="FunFam" id="2.60.40.60:FF:000309">
    <property type="entry name" value="Protocadherin beta-8"/>
    <property type="match status" value="1"/>
</dbReference>
<dbReference type="FunFam" id="2.60.40.60:FF:000018">
    <property type="entry name" value="Protocadherin gamma c3"/>
    <property type="match status" value="1"/>
</dbReference>
<dbReference type="Gene3D" id="2.60.40.60">
    <property type="entry name" value="Cadherins"/>
    <property type="match status" value="6"/>
</dbReference>
<dbReference type="InterPro" id="IPR002126">
    <property type="entry name" value="Cadherin-like_dom"/>
</dbReference>
<dbReference type="InterPro" id="IPR015919">
    <property type="entry name" value="Cadherin-like_sf"/>
</dbReference>
<dbReference type="InterPro" id="IPR032455">
    <property type="entry name" value="Cadherin_C"/>
</dbReference>
<dbReference type="InterPro" id="IPR020894">
    <property type="entry name" value="Cadherin_CS"/>
</dbReference>
<dbReference type="InterPro" id="IPR013164">
    <property type="entry name" value="Cadherin_N"/>
</dbReference>
<dbReference type="InterPro" id="IPR050174">
    <property type="entry name" value="Protocadherin/Cadherin-CA"/>
</dbReference>
<dbReference type="PANTHER" id="PTHR24028">
    <property type="entry name" value="CADHERIN-87A"/>
    <property type="match status" value="1"/>
</dbReference>
<dbReference type="PANTHER" id="PTHR24028:SF54">
    <property type="entry name" value="PROTOCADHERIN BETA-10"/>
    <property type="match status" value="1"/>
</dbReference>
<dbReference type="Pfam" id="PF00028">
    <property type="entry name" value="Cadherin"/>
    <property type="match status" value="5"/>
</dbReference>
<dbReference type="Pfam" id="PF08266">
    <property type="entry name" value="Cadherin_2"/>
    <property type="match status" value="1"/>
</dbReference>
<dbReference type="Pfam" id="PF16492">
    <property type="entry name" value="Cadherin_C_2"/>
    <property type="match status" value="1"/>
</dbReference>
<dbReference type="PRINTS" id="PR00205">
    <property type="entry name" value="CADHERIN"/>
</dbReference>
<dbReference type="SMART" id="SM00112">
    <property type="entry name" value="CA"/>
    <property type="match status" value="5"/>
</dbReference>
<dbReference type="SUPFAM" id="SSF49313">
    <property type="entry name" value="Cadherin-like"/>
    <property type="match status" value="6"/>
</dbReference>
<dbReference type="PROSITE" id="PS00232">
    <property type="entry name" value="CADHERIN_1"/>
    <property type="match status" value="5"/>
</dbReference>
<dbReference type="PROSITE" id="PS50268">
    <property type="entry name" value="CADHERIN_2"/>
    <property type="match status" value="6"/>
</dbReference>